<organism>
    <name type="scientific">Saccharomyces cerevisiae (strain ATCC 204508 / S288c)</name>
    <name type="common">Baker's yeast</name>
    <dbReference type="NCBI Taxonomy" id="559292"/>
    <lineage>
        <taxon>Eukaryota</taxon>
        <taxon>Fungi</taxon>
        <taxon>Dikarya</taxon>
        <taxon>Ascomycota</taxon>
        <taxon>Saccharomycotina</taxon>
        <taxon>Saccharomycetes</taxon>
        <taxon>Saccharomycetales</taxon>
        <taxon>Saccharomycetaceae</taxon>
        <taxon>Saccharomyces</taxon>
    </lineage>
</organism>
<gene>
    <name type="ordered locus">YGR161W-C</name>
</gene>
<reference key="1">
    <citation type="journal article" date="1997" name="Nature">
        <title>The nucleotide sequence of Saccharomyces cerevisiae chromosome VII.</title>
        <authorList>
            <person name="Tettelin H."/>
            <person name="Agostoni-Carbone M.L."/>
            <person name="Albermann K."/>
            <person name="Albers M."/>
            <person name="Arroyo J."/>
            <person name="Backes U."/>
            <person name="Barreiros T."/>
            <person name="Bertani I."/>
            <person name="Bjourson A.J."/>
            <person name="Brueckner M."/>
            <person name="Bruschi C.V."/>
            <person name="Carignani G."/>
            <person name="Castagnoli L."/>
            <person name="Cerdan E."/>
            <person name="Clemente M.L."/>
            <person name="Coblenz A."/>
            <person name="Coglievina M."/>
            <person name="Coissac E."/>
            <person name="Defoor E."/>
            <person name="Del Bino S."/>
            <person name="Delius H."/>
            <person name="Delneri D."/>
            <person name="de Wergifosse P."/>
            <person name="Dujon B."/>
            <person name="Durand P."/>
            <person name="Entian K.-D."/>
            <person name="Eraso P."/>
            <person name="Escribano V."/>
            <person name="Fabiani L."/>
            <person name="Fartmann B."/>
            <person name="Feroli F."/>
            <person name="Feuermann M."/>
            <person name="Frontali L."/>
            <person name="Garcia-Gonzalez M."/>
            <person name="Garcia-Saez M.I."/>
            <person name="Goffeau A."/>
            <person name="Guerreiro P."/>
            <person name="Hani J."/>
            <person name="Hansen M."/>
            <person name="Hebling U."/>
            <person name="Hernandez K."/>
            <person name="Heumann K."/>
            <person name="Hilger F."/>
            <person name="Hofmann B."/>
            <person name="Indge K.J."/>
            <person name="James C.M."/>
            <person name="Klima R."/>
            <person name="Koetter P."/>
            <person name="Kramer B."/>
            <person name="Kramer W."/>
            <person name="Lauquin G."/>
            <person name="Leuther H."/>
            <person name="Louis E.J."/>
            <person name="Maillier E."/>
            <person name="Marconi A."/>
            <person name="Martegani E."/>
            <person name="Mazon M.J."/>
            <person name="Mazzoni C."/>
            <person name="McReynolds A.D.K."/>
            <person name="Melchioretto P."/>
            <person name="Mewes H.-W."/>
            <person name="Minenkova O."/>
            <person name="Mueller-Auer S."/>
            <person name="Nawrocki A."/>
            <person name="Netter P."/>
            <person name="Neu R."/>
            <person name="Nombela C."/>
            <person name="Oliver S.G."/>
            <person name="Panzeri L."/>
            <person name="Paoluzi S."/>
            <person name="Plevani P."/>
            <person name="Portetelle D."/>
            <person name="Portillo F."/>
            <person name="Potier S."/>
            <person name="Purnelle B."/>
            <person name="Rieger M."/>
            <person name="Riles L."/>
            <person name="Rinaldi T."/>
            <person name="Robben J."/>
            <person name="Rodrigues-Pousada C."/>
            <person name="Rodriguez-Belmonte E."/>
            <person name="Rodriguez-Torres A.M."/>
            <person name="Rose M."/>
            <person name="Ruzzi M."/>
            <person name="Saliola M."/>
            <person name="Sanchez-Perez M."/>
            <person name="Schaefer B."/>
            <person name="Schaefer M."/>
            <person name="Scharfe M."/>
            <person name="Schmidheini T."/>
            <person name="Schreer A."/>
            <person name="Skala J."/>
            <person name="Souciet J.-L."/>
            <person name="Steensma H.Y."/>
            <person name="Talla E."/>
            <person name="Thierry A."/>
            <person name="Vandenbol M."/>
            <person name="van der Aart Q.J.M."/>
            <person name="Van Dyck L."/>
            <person name="Vanoni M."/>
            <person name="Verhasselt P."/>
            <person name="Voet M."/>
            <person name="Volckaert G."/>
            <person name="Wambutt R."/>
            <person name="Watson M.D."/>
            <person name="Weber N."/>
            <person name="Wedler E."/>
            <person name="Wedler H."/>
            <person name="Wipfli P."/>
            <person name="Wolf K."/>
            <person name="Wright L.F."/>
            <person name="Zaccaria P."/>
            <person name="Zimmermann M."/>
            <person name="Zollner A."/>
            <person name="Kleine K."/>
        </authorList>
    </citation>
    <scope>NUCLEOTIDE SEQUENCE [LARGE SCALE GENOMIC DNA]</scope>
    <source>
        <strain>ATCC 204508 / S288c</strain>
    </source>
</reference>
<reference key="2">
    <citation type="journal article" date="2014" name="G3 (Bethesda)">
        <title>The reference genome sequence of Saccharomyces cerevisiae: Then and now.</title>
        <authorList>
            <person name="Engel S.R."/>
            <person name="Dietrich F.S."/>
            <person name="Fisk D.G."/>
            <person name="Binkley G."/>
            <person name="Balakrishnan R."/>
            <person name="Costanzo M.C."/>
            <person name="Dwight S.S."/>
            <person name="Hitz B.C."/>
            <person name="Karra K."/>
            <person name="Nash R.S."/>
            <person name="Weng S."/>
            <person name="Wong E.D."/>
            <person name="Lloyd P."/>
            <person name="Skrzypek M.S."/>
            <person name="Miyasato S.R."/>
            <person name="Simison M."/>
            <person name="Cherry J.M."/>
        </authorList>
    </citation>
    <scope>GENOME REANNOTATION</scope>
    <source>
        <strain>ATCC 204508 / S288c</strain>
    </source>
</reference>
<keyword id="KW-1185">Reference proteome</keyword>
<proteinExistence type="predicted"/>
<sequence>MSGYFNHLSSNAHFANIQADQGFIGDATGTSSDHGSSGMVDFALQLGELSLEEKILKEFTLFQSKNMDLLQETATACPSTNPSLRQSRIQGW</sequence>
<protein>
    <recommendedName>
        <fullName>Uncharacterized protein YGR161W-C</fullName>
    </recommendedName>
</protein>
<name>YG161_YEAST</name>
<dbReference type="EMBL" id="Z72946">
    <property type="status" value="NOT_ANNOTATED_CDS"/>
    <property type="molecule type" value="Genomic_DNA"/>
</dbReference>
<dbReference type="EMBL" id="BK006941">
    <property type="protein sequence ID" value="DAA08252.1"/>
    <property type="molecule type" value="Genomic_DNA"/>
</dbReference>
<dbReference type="RefSeq" id="NP_001018033.3">
    <property type="nucleotide sequence ID" value="NM_001184675.3"/>
</dbReference>
<dbReference type="BioGRID" id="37094">
    <property type="interactions" value="43"/>
</dbReference>
<dbReference type="FunCoup" id="Q3E744">
    <property type="interactions" value="20"/>
</dbReference>
<dbReference type="STRING" id="4932.YGR161W-C"/>
<dbReference type="PaxDb" id="4932-YGR161W-C"/>
<dbReference type="PeptideAtlas" id="Q3E744"/>
<dbReference type="EnsemblFungi" id="YGR161W-C_mRNA">
    <property type="protein sequence ID" value="YGR161W-C"/>
    <property type="gene ID" value="YGR161W-C"/>
</dbReference>
<dbReference type="GeneID" id="3077355"/>
<dbReference type="KEGG" id="sce:YGR161W-C"/>
<dbReference type="AGR" id="SGD:S000029726"/>
<dbReference type="SGD" id="S000029726">
    <property type="gene designation" value="YGR161W-C"/>
</dbReference>
<dbReference type="VEuPathDB" id="FungiDB:YGR161W-C"/>
<dbReference type="HOGENOM" id="CLU_2414525_0_0_1"/>
<dbReference type="InParanoid" id="Q3E744"/>
<dbReference type="OrthoDB" id="4040197at2759"/>
<dbReference type="BioCyc" id="YEAST:G3O-31023-MONOMER"/>
<dbReference type="BioGRID-ORCS" id="3077355">
    <property type="hits" value="0 hits in 10 CRISPR screens"/>
</dbReference>
<dbReference type="PRO" id="PR:Q3E744"/>
<dbReference type="Proteomes" id="UP000002311">
    <property type="component" value="Chromosome VII"/>
</dbReference>
<dbReference type="RNAct" id="Q3E744">
    <property type="molecule type" value="protein"/>
</dbReference>
<accession>Q3E744</accession>
<accession>D6VUU1</accession>
<feature type="chain" id="PRO_0000245385" description="Uncharacterized protein YGR161W-C">
    <location>
        <begin position="1"/>
        <end position="92"/>
    </location>
</feature>